<sequence>MSDTPQLVVHRDKELMAEAAAARLITKIVDAQASRGSASVVLTGGRNGNGLLAALAGSPARDAIDWSRLDLWWGDERFLPEGDPERNVTQAQQALLDSVPLDPKRVHAMAASDGPYGSDVEAAAAAYAQELATASVPENHAAVPSFDVLLLGVGPDTHVASLFPEHPGVRETERTVIGVHGSPKPPPIRISLTLPAIRAAREVWLLAAGEDKANAVAMALSGAGEIQAPAAGARGRARTLWLLDSAAASQLPRSLYPPASA</sequence>
<organism>
    <name type="scientific">Streptomyces coelicolor (strain ATCC BAA-471 / A3(2) / M145)</name>
    <dbReference type="NCBI Taxonomy" id="100226"/>
    <lineage>
        <taxon>Bacteria</taxon>
        <taxon>Bacillati</taxon>
        <taxon>Actinomycetota</taxon>
        <taxon>Actinomycetes</taxon>
        <taxon>Kitasatosporales</taxon>
        <taxon>Streptomycetaceae</taxon>
        <taxon>Streptomyces</taxon>
        <taxon>Streptomyces albidoflavus group</taxon>
    </lineage>
</organism>
<reference key="1">
    <citation type="journal article" date="2002" name="Nature">
        <title>Complete genome sequence of the model actinomycete Streptomyces coelicolor A3(2).</title>
        <authorList>
            <person name="Bentley S.D."/>
            <person name="Chater K.F."/>
            <person name="Cerdeno-Tarraga A.-M."/>
            <person name="Challis G.L."/>
            <person name="Thomson N.R."/>
            <person name="James K.D."/>
            <person name="Harris D.E."/>
            <person name="Quail M.A."/>
            <person name="Kieser H."/>
            <person name="Harper D."/>
            <person name="Bateman A."/>
            <person name="Brown S."/>
            <person name="Chandra G."/>
            <person name="Chen C.W."/>
            <person name="Collins M."/>
            <person name="Cronin A."/>
            <person name="Fraser A."/>
            <person name="Goble A."/>
            <person name="Hidalgo J."/>
            <person name="Hornsby T."/>
            <person name="Howarth S."/>
            <person name="Huang C.-H."/>
            <person name="Kieser T."/>
            <person name="Larke L."/>
            <person name="Murphy L.D."/>
            <person name="Oliver K."/>
            <person name="O'Neil S."/>
            <person name="Rabbinowitsch E."/>
            <person name="Rajandream M.A."/>
            <person name="Rutherford K.M."/>
            <person name="Rutter S."/>
            <person name="Seeger K."/>
            <person name="Saunders D."/>
            <person name="Sharp S."/>
            <person name="Squares R."/>
            <person name="Squares S."/>
            <person name="Taylor K."/>
            <person name="Warren T."/>
            <person name="Wietzorrek A."/>
            <person name="Woodward J.R."/>
            <person name="Barrell B.G."/>
            <person name="Parkhill J."/>
            <person name="Hopwood D.A."/>
        </authorList>
    </citation>
    <scope>NUCLEOTIDE SEQUENCE [LARGE SCALE GENOMIC DNA]</scope>
    <source>
        <strain>ATCC BAA-471 / A3(2) / M145</strain>
    </source>
</reference>
<proteinExistence type="inferred from homology"/>
<protein>
    <recommendedName>
        <fullName>6-phosphogluconolactonase</fullName>
        <shortName>6PGL</shortName>
        <ecNumber>3.1.1.31</ecNumber>
    </recommendedName>
</protein>
<feature type="chain" id="PRO_0000090106" description="6-phosphogluconolactonase">
    <location>
        <begin position="1"/>
        <end position="261"/>
    </location>
</feature>
<gene>
    <name type="primary">pgl</name>
    <name type="synonym">devB</name>
    <name type="ordered locus">SCO1939</name>
    <name type="ORF">SCC22.21</name>
</gene>
<keyword id="KW-0378">Hydrolase</keyword>
<keyword id="KW-1185">Reference proteome</keyword>
<name>6PGL_STRCO</name>
<dbReference type="EC" id="3.1.1.31"/>
<dbReference type="EMBL" id="AL939110">
    <property type="protein sequence ID" value="CAB50764.1"/>
    <property type="molecule type" value="Genomic_DNA"/>
</dbReference>
<dbReference type="PIR" id="T36011">
    <property type="entry name" value="T36011"/>
</dbReference>
<dbReference type="RefSeq" id="NP_626204.1">
    <property type="nucleotide sequence ID" value="NC_003888.3"/>
</dbReference>
<dbReference type="RefSeq" id="WP_003976879.1">
    <property type="nucleotide sequence ID" value="NZ_VNID01000001.1"/>
</dbReference>
<dbReference type="SMR" id="Q9XAB7"/>
<dbReference type="FunCoup" id="Q9XAB7">
    <property type="interactions" value="414"/>
</dbReference>
<dbReference type="STRING" id="100226.gene:17759536"/>
<dbReference type="PaxDb" id="100226-SCO1939"/>
<dbReference type="GeneID" id="91387068"/>
<dbReference type="KEGG" id="sco:SCO1939"/>
<dbReference type="PATRIC" id="fig|100226.15.peg.1966"/>
<dbReference type="eggNOG" id="COG0363">
    <property type="taxonomic scope" value="Bacteria"/>
</dbReference>
<dbReference type="HOGENOM" id="CLU_053947_1_0_11"/>
<dbReference type="InParanoid" id="Q9XAB7"/>
<dbReference type="OrthoDB" id="9810967at2"/>
<dbReference type="PhylomeDB" id="Q9XAB7"/>
<dbReference type="UniPathway" id="UPA00115">
    <property type="reaction ID" value="UER00409"/>
</dbReference>
<dbReference type="Proteomes" id="UP000001973">
    <property type="component" value="Chromosome"/>
</dbReference>
<dbReference type="GO" id="GO:0017057">
    <property type="term" value="F:6-phosphogluconolactonase activity"/>
    <property type="evidence" value="ECO:0007669"/>
    <property type="project" value="UniProtKB-EC"/>
</dbReference>
<dbReference type="GO" id="GO:0005975">
    <property type="term" value="P:carbohydrate metabolic process"/>
    <property type="evidence" value="ECO:0007669"/>
    <property type="project" value="InterPro"/>
</dbReference>
<dbReference type="GO" id="GO:0006098">
    <property type="term" value="P:pentose-phosphate shunt"/>
    <property type="evidence" value="ECO:0007669"/>
    <property type="project" value="UniProtKB-UniPathway"/>
</dbReference>
<dbReference type="CDD" id="cd01400">
    <property type="entry name" value="6PGL"/>
    <property type="match status" value="1"/>
</dbReference>
<dbReference type="FunFam" id="3.40.50.1360:FF:000005">
    <property type="entry name" value="6-phosphogluconolactonase"/>
    <property type="match status" value="1"/>
</dbReference>
<dbReference type="Gene3D" id="3.40.50.1360">
    <property type="match status" value="1"/>
</dbReference>
<dbReference type="InterPro" id="IPR005900">
    <property type="entry name" value="6-phosphogluconolactonase_DevB"/>
</dbReference>
<dbReference type="InterPro" id="IPR006148">
    <property type="entry name" value="Glc/Gal-6P_isomerase"/>
</dbReference>
<dbReference type="InterPro" id="IPR037171">
    <property type="entry name" value="NagB/RpiA_transferase-like"/>
</dbReference>
<dbReference type="InterPro" id="IPR039104">
    <property type="entry name" value="PGLS"/>
</dbReference>
<dbReference type="NCBIfam" id="TIGR01198">
    <property type="entry name" value="pgl"/>
    <property type="match status" value="1"/>
</dbReference>
<dbReference type="PANTHER" id="PTHR11054">
    <property type="entry name" value="6-PHOSPHOGLUCONOLACTONASE"/>
    <property type="match status" value="1"/>
</dbReference>
<dbReference type="PANTHER" id="PTHR11054:SF0">
    <property type="entry name" value="6-PHOSPHOGLUCONOLACTONASE"/>
    <property type="match status" value="1"/>
</dbReference>
<dbReference type="Pfam" id="PF01182">
    <property type="entry name" value="Glucosamine_iso"/>
    <property type="match status" value="1"/>
</dbReference>
<dbReference type="SUPFAM" id="SSF100950">
    <property type="entry name" value="NagB/RpiA/CoA transferase-like"/>
    <property type="match status" value="1"/>
</dbReference>
<evidence type="ECO:0000305" key="1"/>
<accession>Q9XAB7</accession>
<comment type="function">
    <text>Hydrolysis of 6-phosphogluconolactone to 6-phosphogluconate.</text>
</comment>
<comment type="catalytic activity">
    <reaction>
        <text>6-phospho-D-glucono-1,5-lactone + H2O = 6-phospho-D-gluconate + H(+)</text>
        <dbReference type="Rhea" id="RHEA:12556"/>
        <dbReference type="ChEBI" id="CHEBI:15377"/>
        <dbReference type="ChEBI" id="CHEBI:15378"/>
        <dbReference type="ChEBI" id="CHEBI:57955"/>
        <dbReference type="ChEBI" id="CHEBI:58759"/>
        <dbReference type="EC" id="3.1.1.31"/>
    </reaction>
</comment>
<comment type="pathway">
    <text>Carbohydrate degradation; pentose phosphate pathway; D-ribulose 5-phosphate from D-glucose 6-phosphate (oxidative stage): step 2/3.</text>
</comment>
<comment type="similarity">
    <text evidence="1">Belongs to the glucosamine/galactosamine-6-phosphate isomerase family. 6-phosphogluconolactonase subfamily.</text>
</comment>